<evidence type="ECO:0000250" key="1"/>
<evidence type="ECO:0000255" key="2"/>
<evidence type="ECO:0000255" key="3">
    <source>
        <dbReference type="PROSITE-ProRule" id="PRU00040"/>
    </source>
</evidence>
<evidence type="ECO:0000305" key="4"/>
<reference key="1">
    <citation type="submission" date="2005-05" db="EMBL/GenBank/DDBJ databases">
        <title>Molecular cloning and sequence analysis of cDNAs encoding seven C-type lectin-like protein subunits from Daboia russellii siamensis.</title>
        <authorList>
            <person name="Zhong S."/>
            <person name="Jin Y."/>
            <person name="Li D."/>
            <person name="Wang W."/>
            <person name="Xiong Y."/>
        </authorList>
    </citation>
    <scope>NUCLEOTIDE SEQUENCE [MRNA]</scope>
</reference>
<dbReference type="EMBL" id="DQ060420">
    <property type="protein sequence ID" value="AAY63876.1"/>
    <property type="molecule type" value="mRNA"/>
</dbReference>
<dbReference type="SMR" id="Q4PRC6"/>
<dbReference type="GO" id="GO:0005576">
    <property type="term" value="C:extracellular region"/>
    <property type="evidence" value="ECO:0007669"/>
    <property type="project" value="UniProtKB-SubCell"/>
</dbReference>
<dbReference type="GO" id="GO:0090729">
    <property type="term" value="F:toxin activity"/>
    <property type="evidence" value="ECO:0007669"/>
    <property type="project" value="UniProtKB-KW"/>
</dbReference>
<dbReference type="CDD" id="cd00037">
    <property type="entry name" value="CLECT"/>
    <property type="match status" value="1"/>
</dbReference>
<dbReference type="FunFam" id="3.10.100.10:FF:000087">
    <property type="entry name" value="Snaclec rhodocetin subunit delta"/>
    <property type="match status" value="1"/>
</dbReference>
<dbReference type="Gene3D" id="3.10.100.10">
    <property type="entry name" value="Mannose-Binding Protein A, subunit A"/>
    <property type="match status" value="1"/>
</dbReference>
<dbReference type="InterPro" id="IPR001304">
    <property type="entry name" value="C-type_lectin-like"/>
</dbReference>
<dbReference type="InterPro" id="IPR016186">
    <property type="entry name" value="C-type_lectin-like/link_sf"/>
</dbReference>
<dbReference type="InterPro" id="IPR050111">
    <property type="entry name" value="C-type_lectin/snaclec_domain"/>
</dbReference>
<dbReference type="InterPro" id="IPR018378">
    <property type="entry name" value="C-type_lectin_CS"/>
</dbReference>
<dbReference type="InterPro" id="IPR016187">
    <property type="entry name" value="CTDL_fold"/>
</dbReference>
<dbReference type="PANTHER" id="PTHR22803">
    <property type="entry name" value="MANNOSE, PHOSPHOLIPASE, LECTIN RECEPTOR RELATED"/>
    <property type="match status" value="1"/>
</dbReference>
<dbReference type="Pfam" id="PF00059">
    <property type="entry name" value="Lectin_C"/>
    <property type="match status" value="1"/>
</dbReference>
<dbReference type="PRINTS" id="PR01504">
    <property type="entry name" value="PNCREATITSAP"/>
</dbReference>
<dbReference type="SMART" id="SM00034">
    <property type="entry name" value="CLECT"/>
    <property type="match status" value="1"/>
</dbReference>
<dbReference type="SUPFAM" id="SSF56436">
    <property type="entry name" value="C-type lectin-like"/>
    <property type="match status" value="1"/>
</dbReference>
<dbReference type="PROSITE" id="PS00615">
    <property type="entry name" value="C_TYPE_LECTIN_1"/>
    <property type="match status" value="1"/>
</dbReference>
<dbReference type="PROSITE" id="PS50041">
    <property type="entry name" value="C_TYPE_LECTIN_2"/>
    <property type="match status" value="1"/>
</dbReference>
<feature type="signal peptide" evidence="2">
    <location>
        <begin position="1"/>
        <end position="23"/>
    </location>
</feature>
<feature type="chain" id="PRO_0000017541" description="Snaclec 7">
    <location>
        <begin position="24"/>
        <end position="150"/>
    </location>
</feature>
<feature type="domain" description="C-type lectin" evidence="3">
    <location>
        <begin position="34"/>
        <end position="145"/>
    </location>
</feature>
<feature type="disulfide bond" evidence="3">
    <location>
        <begin position="27"/>
        <end position="38"/>
    </location>
</feature>
<feature type="disulfide bond" evidence="3">
    <location>
        <begin position="55"/>
        <end position="144"/>
    </location>
</feature>
<feature type="disulfide bond" description="Interchain" evidence="3">
    <location>
        <position position="100"/>
    </location>
</feature>
<feature type="disulfide bond" evidence="3">
    <location>
        <begin position="121"/>
        <end position="136"/>
    </location>
</feature>
<proteinExistence type="evidence at transcript level"/>
<accession>Q4PRC6</accession>
<organism>
    <name type="scientific">Daboia siamensis</name>
    <name type="common">Eastern Russel's viper</name>
    <name type="synonym">Daboia russelii siamensis</name>
    <dbReference type="NCBI Taxonomy" id="343250"/>
    <lineage>
        <taxon>Eukaryota</taxon>
        <taxon>Metazoa</taxon>
        <taxon>Chordata</taxon>
        <taxon>Craniata</taxon>
        <taxon>Vertebrata</taxon>
        <taxon>Euteleostomi</taxon>
        <taxon>Lepidosauria</taxon>
        <taxon>Squamata</taxon>
        <taxon>Bifurcata</taxon>
        <taxon>Unidentata</taxon>
        <taxon>Episquamata</taxon>
        <taxon>Toxicofera</taxon>
        <taxon>Serpentes</taxon>
        <taxon>Colubroidea</taxon>
        <taxon>Viperidae</taxon>
        <taxon>Viperinae</taxon>
        <taxon>Daboia</taxon>
    </lineage>
</organism>
<comment type="function">
    <text evidence="1">Interferes with one step of hemostasis (modulation of platelet aggregation, or coagulation cascade, for example).</text>
</comment>
<comment type="subunit">
    <text evidence="1">Heterodimer; disulfide-linked.</text>
</comment>
<comment type="subcellular location">
    <subcellularLocation>
        <location evidence="1">Secreted</location>
    </subcellularLocation>
</comment>
<comment type="similarity">
    <text evidence="4">Belongs to the snaclec family.</text>
</comment>
<name>SL7_DABSI</name>
<protein>
    <recommendedName>
        <fullName>Snaclec 7</fullName>
    </recommendedName>
    <alternativeName>
        <fullName>C-type lectin-like 7</fullName>
    </alternativeName>
</protein>
<sequence>MGRFISISFGLLVVFLSLSGTGAKQDCLSDWSFYEGYCYKVFNEKKTWEDAEKFCNEQVNGGYLVSFRSSEEMDFVIRMTFPIFRFDFFWIGLRDFWRDCYWRWSDGVNLDYKAWSREPNCFVSKTTDNQWLRWNCNDPRYFVCKSRVSC</sequence>
<keyword id="KW-1015">Disulfide bond</keyword>
<keyword id="KW-1199">Hemostasis impairing toxin</keyword>
<keyword id="KW-0964">Secreted</keyword>
<keyword id="KW-0732">Signal</keyword>
<keyword id="KW-0800">Toxin</keyword>